<organism>
    <name type="scientific">Syntrophus aciditrophicus (strain SB)</name>
    <dbReference type="NCBI Taxonomy" id="56780"/>
    <lineage>
        <taxon>Bacteria</taxon>
        <taxon>Pseudomonadati</taxon>
        <taxon>Thermodesulfobacteriota</taxon>
        <taxon>Syntrophia</taxon>
        <taxon>Syntrophales</taxon>
        <taxon>Syntrophaceae</taxon>
        <taxon>Syntrophus</taxon>
    </lineage>
</organism>
<sequence length="478" mass="52652">MEFEAVIGLEIHIELNCPTKLFCDCPNNPGDEPNVNTCPICLWFPGAIPRLSQAALEKASLLCLGLGAELQPRSAFDQKVYYYPDLPKGYQLSQAHLPLARGGGIDITDENGRPKRLRIHHIHMEEDVAKLVHEIEGRTPISLVDFNRAGAPLVEIVSEPDFRTPHDAMEFLKALRTQVRYVGASECSMENGTMRVDANISVRPRGTDQMNTKVEVKNMNSIRHVGDAVAYEISRQSACVSSGEAVVLHTRLWDPDRKATFPMRAKFEGPCVPDPSVPFIDLSPEWIEKMRARLPEMPAARAERFVARYGLTDEEAVYLSADPETASYFEALIAEKVAPRTAMHWLTTQLLAAVRERGQELSGTPVTPARFAALLKMLAKDEINANAARQVLIELFDCGESPEKIVEARGIRQVSDHDALEGLIDRVLGENPAAVADYRGGQGKAAGFLIGKVMQASGGKANPKIIRELLTKKLDALG</sequence>
<reference key="1">
    <citation type="journal article" date="2007" name="Proc. Natl. Acad. Sci. U.S.A.">
        <title>The genome of Syntrophus aciditrophicus: life at the thermodynamic limit of microbial growth.</title>
        <authorList>
            <person name="McInerney M.J."/>
            <person name="Rohlin L."/>
            <person name="Mouttaki H."/>
            <person name="Kim U."/>
            <person name="Krupp R.S."/>
            <person name="Rios-Hernandez L."/>
            <person name="Sieber J."/>
            <person name="Struchtemeyer C.G."/>
            <person name="Bhattacharyya A."/>
            <person name="Campbell J.W."/>
            <person name="Gunsalus R.P."/>
        </authorList>
    </citation>
    <scope>NUCLEOTIDE SEQUENCE [LARGE SCALE GENOMIC DNA]</scope>
    <source>
        <strain>SB</strain>
    </source>
</reference>
<protein>
    <recommendedName>
        <fullName evidence="1">Aspartyl/glutamyl-tRNA(Asn/Gln) amidotransferase subunit B 1</fullName>
        <shortName evidence="1">Asp/Glu-ADT subunit B 1</shortName>
        <ecNumber evidence="1">6.3.5.-</ecNumber>
    </recommendedName>
</protein>
<evidence type="ECO:0000255" key="1">
    <source>
        <dbReference type="HAMAP-Rule" id="MF_00121"/>
    </source>
</evidence>
<gene>
    <name evidence="1" type="primary">gatB1</name>
    <name type="ordered locus">SYNAS_04500</name>
    <name type="ORF">SYN_02604</name>
</gene>
<comment type="function">
    <text evidence="1">Allows the formation of correctly charged Asn-tRNA(Asn) or Gln-tRNA(Gln) through the transamidation of misacylated Asp-tRNA(Asn) or Glu-tRNA(Gln) in organisms which lack either or both of asparaginyl-tRNA or glutaminyl-tRNA synthetases. The reaction takes place in the presence of glutamine and ATP through an activated phospho-Asp-tRNA(Asn) or phospho-Glu-tRNA(Gln).</text>
</comment>
<comment type="catalytic activity">
    <reaction evidence="1">
        <text>L-glutamyl-tRNA(Gln) + L-glutamine + ATP + H2O = L-glutaminyl-tRNA(Gln) + L-glutamate + ADP + phosphate + H(+)</text>
        <dbReference type="Rhea" id="RHEA:17521"/>
        <dbReference type="Rhea" id="RHEA-COMP:9681"/>
        <dbReference type="Rhea" id="RHEA-COMP:9684"/>
        <dbReference type="ChEBI" id="CHEBI:15377"/>
        <dbReference type="ChEBI" id="CHEBI:15378"/>
        <dbReference type="ChEBI" id="CHEBI:29985"/>
        <dbReference type="ChEBI" id="CHEBI:30616"/>
        <dbReference type="ChEBI" id="CHEBI:43474"/>
        <dbReference type="ChEBI" id="CHEBI:58359"/>
        <dbReference type="ChEBI" id="CHEBI:78520"/>
        <dbReference type="ChEBI" id="CHEBI:78521"/>
        <dbReference type="ChEBI" id="CHEBI:456216"/>
    </reaction>
</comment>
<comment type="catalytic activity">
    <reaction evidence="1">
        <text>L-aspartyl-tRNA(Asn) + L-glutamine + ATP + H2O = L-asparaginyl-tRNA(Asn) + L-glutamate + ADP + phosphate + 2 H(+)</text>
        <dbReference type="Rhea" id="RHEA:14513"/>
        <dbReference type="Rhea" id="RHEA-COMP:9674"/>
        <dbReference type="Rhea" id="RHEA-COMP:9677"/>
        <dbReference type="ChEBI" id="CHEBI:15377"/>
        <dbReference type="ChEBI" id="CHEBI:15378"/>
        <dbReference type="ChEBI" id="CHEBI:29985"/>
        <dbReference type="ChEBI" id="CHEBI:30616"/>
        <dbReference type="ChEBI" id="CHEBI:43474"/>
        <dbReference type="ChEBI" id="CHEBI:58359"/>
        <dbReference type="ChEBI" id="CHEBI:78515"/>
        <dbReference type="ChEBI" id="CHEBI:78516"/>
        <dbReference type="ChEBI" id="CHEBI:456216"/>
    </reaction>
</comment>
<comment type="subunit">
    <text evidence="1">Heterotrimer of A, B and C subunits.</text>
</comment>
<comment type="similarity">
    <text evidence="1">Belongs to the GatB/GatE family. GatB subfamily.</text>
</comment>
<feature type="chain" id="PRO_0000241292" description="Aspartyl/glutamyl-tRNA(Asn/Gln) amidotransferase subunit B 1">
    <location>
        <begin position="1"/>
        <end position="478"/>
    </location>
</feature>
<keyword id="KW-0067">ATP-binding</keyword>
<keyword id="KW-0436">Ligase</keyword>
<keyword id="KW-0547">Nucleotide-binding</keyword>
<keyword id="KW-0648">Protein biosynthesis</keyword>
<keyword id="KW-1185">Reference proteome</keyword>
<accession>Q2LPY6</accession>
<name>GATB1_SYNAS</name>
<dbReference type="EC" id="6.3.5.-" evidence="1"/>
<dbReference type="EMBL" id="CP000252">
    <property type="protein sequence ID" value="ABC76329.1"/>
    <property type="molecule type" value="Genomic_DNA"/>
</dbReference>
<dbReference type="RefSeq" id="WP_011416363.1">
    <property type="nucleotide sequence ID" value="NC_007759.1"/>
</dbReference>
<dbReference type="SMR" id="Q2LPY6"/>
<dbReference type="STRING" id="56780.SYN_02604"/>
<dbReference type="KEGG" id="sat:SYN_02604"/>
<dbReference type="eggNOG" id="COG0064">
    <property type="taxonomic scope" value="Bacteria"/>
</dbReference>
<dbReference type="HOGENOM" id="CLU_019240_0_0_7"/>
<dbReference type="InParanoid" id="Q2LPY6"/>
<dbReference type="OrthoDB" id="9804078at2"/>
<dbReference type="Proteomes" id="UP000001933">
    <property type="component" value="Chromosome"/>
</dbReference>
<dbReference type="GO" id="GO:0050566">
    <property type="term" value="F:asparaginyl-tRNA synthase (glutamine-hydrolyzing) activity"/>
    <property type="evidence" value="ECO:0007669"/>
    <property type="project" value="RHEA"/>
</dbReference>
<dbReference type="GO" id="GO:0005524">
    <property type="term" value="F:ATP binding"/>
    <property type="evidence" value="ECO:0007669"/>
    <property type="project" value="UniProtKB-KW"/>
</dbReference>
<dbReference type="GO" id="GO:0050567">
    <property type="term" value="F:glutaminyl-tRNA synthase (glutamine-hydrolyzing) activity"/>
    <property type="evidence" value="ECO:0007669"/>
    <property type="project" value="UniProtKB-UniRule"/>
</dbReference>
<dbReference type="GO" id="GO:0070681">
    <property type="term" value="P:glutaminyl-tRNAGln biosynthesis via transamidation"/>
    <property type="evidence" value="ECO:0007669"/>
    <property type="project" value="TreeGrafter"/>
</dbReference>
<dbReference type="GO" id="GO:0006412">
    <property type="term" value="P:translation"/>
    <property type="evidence" value="ECO:0007669"/>
    <property type="project" value="UniProtKB-UniRule"/>
</dbReference>
<dbReference type="FunFam" id="1.10.10.410:FF:000001">
    <property type="entry name" value="Aspartyl/glutamyl-tRNA(Asn/Gln) amidotransferase subunit B"/>
    <property type="match status" value="1"/>
</dbReference>
<dbReference type="Gene3D" id="1.10.10.410">
    <property type="match status" value="1"/>
</dbReference>
<dbReference type="Gene3D" id="1.10.150.380">
    <property type="entry name" value="GatB domain, N-terminal subdomain"/>
    <property type="match status" value="1"/>
</dbReference>
<dbReference type="HAMAP" id="MF_00121">
    <property type="entry name" value="GatB"/>
    <property type="match status" value="1"/>
</dbReference>
<dbReference type="InterPro" id="IPR017959">
    <property type="entry name" value="Asn/Gln-tRNA_amidoTrfase_suB/E"/>
</dbReference>
<dbReference type="InterPro" id="IPR006075">
    <property type="entry name" value="Asn/Gln-tRNA_Trfase_suB/E_cat"/>
</dbReference>
<dbReference type="InterPro" id="IPR018027">
    <property type="entry name" value="Asn/Gln_amidotransferase"/>
</dbReference>
<dbReference type="InterPro" id="IPR003789">
    <property type="entry name" value="Asn/Gln_tRNA_amidoTrase-B-like"/>
</dbReference>
<dbReference type="InterPro" id="IPR004413">
    <property type="entry name" value="GatB"/>
</dbReference>
<dbReference type="InterPro" id="IPR042114">
    <property type="entry name" value="GatB_C_1"/>
</dbReference>
<dbReference type="InterPro" id="IPR023168">
    <property type="entry name" value="GatB_Yqey_C_2"/>
</dbReference>
<dbReference type="InterPro" id="IPR017958">
    <property type="entry name" value="Gln-tRNA_amidoTrfase_suB_CS"/>
</dbReference>
<dbReference type="InterPro" id="IPR014746">
    <property type="entry name" value="Gln_synth/guanido_kin_cat_dom"/>
</dbReference>
<dbReference type="NCBIfam" id="TIGR00133">
    <property type="entry name" value="gatB"/>
    <property type="match status" value="1"/>
</dbReference>
<dbReference type="NCBIfam" id="NF004012">
    <property type="entry name" value="PRK05477.1-2"/>
    <property type="match status" value="1"/>
</dbReference>
<dbReference type="NCBIfam" id="NF004014">
    <property type="entry name" value="PRK05477.1-4"/>
    <property type="match status" value="1"/>
</dbReference>
<dbReference type="PANTHER" id="PTHR11659">
    <property type="entry name" value="GLUTAMYL-TRNA GLN AMIDOTRANSFERASE SUBUNIT B MITOCHONDRIAL AND PROKARYOTIC PET112-RELATED"/>
    <property type="match status" value="1"/>
</dbReference>
<dbReference type="PANTHER" id="PTHR11659:SF0">
    <property type="entry name" value="GLUTAMYL-TRNA(GLN) AMIDOTRANSFERASE SUBUNIT B, MITOCHONDRIAL"/>
    <property type="match status" value="1"/>
</dbReference>
<dbReference type="Pfam" id="PF02934">
    <property type="entry name" value="GatB_N"/>
    <property type="match status" value="1"/>
</dbReference>
<dbReference type="Pfam" id="PF02637">
    <property type="entry name" value="GatB_Yqey"/>
    <property type="match status" value="1"/>
</dbReference>
<dbReference type="SMART" id="SM00845">
    <property type="entry name" value="GatB_Yqey"/>
    <property type="match status" value="1"/>
</dbReference>
<dbReference type="SUPFAM" id="SSF89095">
    <property type="entry name" value="GatB/YqeY motif"/>
    <property type="match status" value="1"/>
</dbReference>
<dbReference type="SUPFAM" id="SSF55931">
    <property type="entry name" value="Glutamine synthetase/guanido kinase"/>
    <property type="match status" value="1"/>
</dbReference>
<dbReference type="PROSITE" id="PS01234">
    <property type="entry name" value="GATB"/>
    <property type="match status" value="1"/>
</dbReference>
<proteinExistence type="inferred from homology"/>